<gene>
    <name type="primary">serS</name>
    <name type="ordered locus">TT_C0520</name>
</gene>
<proteinExistence type="evidence at protein level"/>
<keyword id="KW-0002">3D-structure</keyword>
<keyword id="KW-0030">Aminoacyl-tRNA synthetase</keyword>
<keyword id="KW-0067">ATP-binding</keyword>
<keyword id="KW-0963">Cytoplasm</keyword>
<keyword id="KW-0436">Ligase</keyword>
<keyword id="KW-0547">Nucleotide-binding</keyword>
<keyword id="KW-0648">Protein biosynthesis</keyword>
<name>SYS_THET2</name>
<feature type="chain" id="PRO_0000122145" description="Serine--tRNA ligase">
    <location>
        <begin position="1"/>
        <end position="421"/>
    </location>
</feature>
<feature type="binding site">
    <location>
        <begin position="225"/>
        <end position="227"/>
    </location>
    <ligand>
        <name>L-serine</name>
        <dbReference type="ChEBI" id="CHEBI:33384"/>
    </ligand>
</feature>
<feature type="binding site">
    <location>
        <begin position="256"/>
        <end position="258"/>
    </location>
    <ligand>
        <name>ATP</name>
        <dbReference type="ChEBI" id="CHEBI:30616"/>
    </ligand>
</feature>
<feature type="binding site">
    <location>
        <position position="272"/>
    </location>
    <ligand>
        <name>ATP</name>
        <dbReference type="ChEBI" id="CHEBI:30616"/>
    </ligand>
</feature>
<feature type="binding site">
    <location>
        <position position="279"/>
    </location>
    <ligand>
        <name>L-serine</name>
        <dbReference type="ChEBI" id="CHEBI:33384"/>
    </ligand>
</feature>
<feature type="binding site">
    <location>
        <begin position="345"/>
        <end position="348"/>
    </location>
    <ligand>
        <name>ATP</name>
        <dbReference type="ChEBI" id="CHEBI:30616"/>
    </ligand>
</feature>
<feature type="binding site">
    <location>
        <position position="380"/>
    </location>
    <ligand>
        <name>L-serine</name>
        <dbReference type="ChEBI" id="CHEBI:33384"/>
    </ligand>
</feature>
<feature type="helix" evidence="7">
    <location>
        <begin position="4"/>
        <end position="9"/>
    </location>
</feature>
<feature type="helix" evidence="7">
    <location>
        <begin position="11"/>
        <end position="21"/>
    </location>
</feature>
<feature type="helix" evidence="6">
    <location>
        <begin position="27"/>
        <end position="36"/>
    </location>
</feature>
<feature type="helix" evidence="9">
    <location>
        <begin position="49"/>
        <end position="60"/>
    </location>
</feature>
<feature type="helix" evidence="9">
    <location>
        <begin position="63"/>
        <end position="78"/>
    </location>
</feature>
<feature type="helix" evidence="6">
    <location>
        <begin position="90"/>
        <end position="98"/>
    </location>
</feature>
<feature type="strand" evidence="7">
    <location>
        <begin position="111"/>
        <end position="113"/>
    </location>
</feature>
<feature type="helix" evidence="7">
    <location>
        <begin position="114"/>
        <end position="116"/>
    </location>
</feature>
<feature type="strand" evidence="7">
    <location>
        <begin position="118"/>
        <end position="124"/>
    </location>
</feature>
<feature type="helix" evidence="7">
    <location>
        <begin position="136"/>
        <end position="143"/>
    </location>
</feature>
<feature type="helix" evidence="7">
    <location>
        <begin position="150"/>
        <end position="154"/>
    </location>
</feature>
<feature type="helix" evidence="7">
    <location>
        <begin position="164"/>
        <end position="182"/>
    </location>
</feature>
<feature type="strand" evidence="7">
    <location>
        <begin position="186"/>
        <end position="189"/>
    </location>
</feature>
<feature type="strand" evidence="7">
    <location>
        <begin position="192"/>
        <end position="195"/>
    </location>
</feature>
<feature type="helix" evidence="7">
    <location>
        <begin position="196"/>
        <end position="202"/>
    </location>
</feature>
<feature type="turn" evidence="7">
    <location>
        <begin position="205"/>
        <end position="208"/>
    </location>
</feature>
<feature type="helix" evidence="7">
    <location>
        <begin position="209"/>
        <end position="211"/>
    </location>
</feature>
<feature type="strand" evidence="7">
    <location>
        <begin position="218"/>
        <end position="222"/>
    </location>
</feature>
<feature type="helix" evidence="7">
    <location>
        <begin position="227"/>
        <end position="232"/>
    </location>
</feature>
<feature type="turn" evidence="7">
    <location>
        <begin position="233"/>
        <end position="236"/>
    </location>
</feature>
<feature type="strand" evidence="7">
    <location>
        <begin position="238"/>
        <end position="240"/>
    </location>
</feature>
<feature type="helix" evidence="7">
    <location>
        <begin position="241"/>
        <end position="243"/>
    </location>
</feature>
<feature type="strand" evidence="7">
    <location>
        <begin position="245"/>
        <end position="255"/>
    </location>
</feature>
<feature type="strand" evidence="8">
    <location>
        <begin position="268"/>
        <end position="271"/>
    </location>
</feature>
<feature type="strand" evidence="7">
    <location>
        <begin position="273"/>
        <end position="284"/>
    </location>
</feature>
<feature type="helix" evidence="7">
    <location>
        <begin position="288"/>
        <end position="308"/>
    </location>
</feature>
<feature type="strand" evidence="7">
    <location>
        <begin position="313"/>
        <end position="317"/>
    </location>
</feature>
<feature type="helix" evidence="7">
    <location>
        <begin position="320"/>
        <end position="323"/>
    </location>
</feature>
<feature type="strand" evidence="7">
    <location>
        <begin position="328"/>
        <end position="336"/>
    </location>
</feature>
<feature type="turn" evidence="7">
    <location>
        <begin position="338"/>
        <end position="340"/>
    </location>
</feature>
<feature type="strand" evidence="7">
    <location>
        <begin position="341"/>
        <end position="353"/>
    </location>
</feature>
<feature type="helix" evidence="7">
    <location>
        <begin position="355"/>
        <end position="360"/>
    </location>
</feature>
<feature type="strand" evidence="7">
    <location>
        <begin position="363"/>
        <end position="365"/>
    </location>
</feature>
<feature type="strand" evidence="7">
    <location>
        <begin position="371"/>
        <end position="373"/>
    </location>
</feature>
<feature type="strand" evidence="7">
    <location>
        <begin position="375"/>
        <end position="384"/>
    </location>
</feature>
<feature type="helix" evidence="7">
    <location>
        <begin position="386"/>
        <end position="395"/>
    </location>
</feature>
<feature type="helix" evidence="7">
    <location>
        <begin position="406"/>
        <end position="408"/>
    </location>
</feature>
<feature type="helix" evidence="7">
    <location>
        <begin position="409"/>
        <end position="412"/>
    </location>
</feature>
<feature type="strand" evidence="7">
    <location>
        <begin position="413"/>
        <end position="417"/>
    </location>
</feature>
<protein>
    <recommendedName>
        <fullName>Serine--tRNA ligase</fullName>
        <ecNumber>6.1.1.11</ecNumber>
    </recommendedName>
    <alternativeName>
        <fullName>Seryl-tRNA synthetase</fullName>
        <shortName>SerRS</shortName>
    </alternativeName>
    <alternativeName>
        <fullName>Seryl-tRNA(Ser/Sec) synthetase</fullName>
    </alternativeName>
</protein>
<accession>P34945</accession>
<evidence type="ECO:0000250" key="1"/>
<evidence type="ECO:0000269" key="2">
    <source>
    </source>
</evidence>
<evidence type="ECO:0000269" key="3">
    <source>
    </source>
</evidence>
<evidence type="ECO:0000269" key="4">
    <source>
    </source>
</evidence>
<evidence type="ECO:0000305" key="5"/>
<evidence type="ECO:0007829" key="6">
    <source>
        <dbReference type="PDB" id="1SER"/>
    </source>
</evidence>
<evidence type="ECO:0007829" key="7">
    <source>
        <dbReference type="PDB" id="1SES"/>
    </source>
</evidence>
<evidence type="ECO:0007829" key="8">
    <source>
        <dbReference type="PDB" id="1SRY"/>
    </source>
</evidence>
<evidence type="ECO:0007829" key="9">
    <source>
        <dbReference type="PDB" id="5EIU"/>
    </source>
</evidence>
<reference key="1">
    <citation type="journal article" date="2004" name="Nat. Biotechnol.">
        <title>The genome sequence of the extreme thermophile Thermus thermophilus.</title>
        <authorList>
            <person name="Henne A."/>
            <person name="Brueggemann H."/>
            <person name="Raasch C."/>
            <person name="Wiezer A."/>
            <person name="Hartsch T."/>
            <person name="Liesegang H."/>
            <person name="Johann A."/>
            <person name="Lienard T."/>
            <person name="Gohl O."/>
            <person name="Martinez-Arias R."/>
            <person name="Jacobi C."/>
            <person name="Starkuviene V."/>
            <person name="Schlenczeck S."/>
            <person name="Dencker S."/>
            <person name="Huber R."/>
            <person name="Klenk H.-P."/>
            <person name="Kramer W."/>
            <person name="Merkl R."/>
            <person name="Gottschalk G."/>
            <person name="Fritz H.-J."/>
        </authorList>
    </citation>
    <scope>NUCLEOTIDE SEQUENCE [LARGE SCALE GENOMIC DNA]</scope>
    <source>
        <strain>ATCC BAA-163 / DSM 7039 / HB27</strain>
    </source>
</reference>
<reference key="2">
    <citation type="journal article" date="1993" name="J. Mol. Biol.">
        <title>Refined crystal structure of the seryl-tRNA synthetase from Thermus thermophilus at 2.5-A resolution.</title>
        <authorList>
            <person name="Fujinaga M."/>
            <person name="Berthet-Colominas C."/>
            <person name="Yaremchuk A.D."/>
            <person name="Tukalo M.A."/>
            <person name="Cusack S."/>
        </authorList>
    </citation>
    <scope>X-RAY CRYSTALLOGRAPHY (2.5 ANGSTROMS)</scope>
    <scope>SUBUNIT</scope>
</reference>
<reference key="3">
    <citation type="journal article" date="1994" name="Science">
        <title>Crystal structures at 2.5 angstrom resolution of seryl-tRNA synthetase complexed with two analogs of seryl adenylate.</title>
        <authorList>
            <person name="Belrhali H."/>
            <person name="Yaremchuk A.D."/>
            <person name="Tukalo M.A."/>
            <person name="Larsen K."/>
            <person name="Berthet-Colominas C."/>
            <person name="Leberman R."/>
            <person name="Beijer B."/>
            <person name="Sproat B."/>
            <person name="Als-Nielsen J."/>
            <person name="Gruebel G."/>
            <person name="Legrand J.-F."/>
            <person name="Lehmann M."/>
            <person name="Cusack S."/>
        </authorList>
    </citation>
    <scope>X-RAY CRYSTALLOGRAPHY (2.5 ANGSTROMS) IN COMPLEXES WITH SUBSTRATE ANALOGS</scope>
</reference>
<reference key="4">
    <citation type="journal article" date="1994" name="Science">
        <title>The 2.9 A crystal structure of T. thermophilus seryl-tRNA synthetase complexed with tRNA(Ser).</title>
        <authorList>
            <person name="Biou V."/>
            <person name="Yaremchuk A.D."/>
            <person name="Tukalo M.A."/>
            <person name="Cusack S."/>
        </authorList>
    </citation>
    <scope>X-RAY CRYSTALLOGRAPHY (2.9 ANGSTROMS) IN COMPLEX WITH TRNA(SER)</scope>
    <scope>SUBUNIT</scope>
</reference>
<reference key="5">
    <citation type="journal article" date="1996" name="EMBO J.">
        <title>The crystal structure of the ternary complex of T.thermophilus seryl-tRNA synthetase with tRNA(Ser) and a seryl-adenylate analogue reveals a conformational switch in the active site.</title>
        <authorList>
            <person name="Cusack S."/>
            <person name="Yaremchuk A.D."/>
            <person name="Tukalo M.A."/>
        </authorList>
    </citation>
    <scope>X-RAY CRYSTALLOGRAPHY (2.7 ANGSTROMS) IN COMPLEX WITH TRNA(SER) AND SUBSTRATE ANALOG</scope>
    <scope>SUBUNIT</scope>
</reference>
<comment type="function">
    <text>Catalyzes the attachment of serine to tRNA(Ser). Is also probably able to aminoacylate tRNA(Sec) with serine, to form the misacylated tRNA L-seryl-tRNA(Sec), which will be further converted into selenocysteinyl-tRNA(Sec).</text>
</comment>
<comment type="catalytic activity">
    <reaction>
        <text>tRNA(Ser) + L-serine + ATP = L-seryl-tRNA(Ser) + AMP + diphosphate + H(+)</text>
        <dbReference type="Rhea" id="RHEA:12292"/>
        <dbReference type="Rhea" id="RHEA-COMP:9669"/>
        <dbReference type="Rhea" id="RHEA-COMP:9703"/>
        <dbReference type="ChEBI" id="CHEBI:15378"/>
        <dbReference type="ChEBI" id="CHEBI:30616"/>
        <dbReference type="ChEBI" id="CHEBI:33019"/>
        <dbReference type="ChEBI" id="CHEBI:33384"/>
        <dbReference type="ChEBI" id="CHEBI:78442"/>
        <dbReference type="ChEBI" id="CHEBI:78533"/>
        <dbReference type="ChEBI" id="CHEBI:456215"/>
        <dbReference type="EC" id="6.1.1.11"/>
    </reaction>
</comment>
<comment type="catalytic activity">
    <reaction>
        <text>tRNA(Sec) + L-serine + ATP = L-seryl-tRNA(Sec) + AMP + diphosphate + H(+)</text>
        <dbReference type="Rhea" id="RHEA:42580"/>
        <dbReference type="Rhea" id="RHEA-COMP:9742"/>
        <dbReference type="Rhea" id="RHEA-COMP:10128"/>
        <dbReference type="ChEBI" id="CHEBI:15378"/>
        <dbReference type="ChEBI" id="CHEBI:30616"/>
        <dbReference type="ChEBI" id="CHEBI:33019"/>
        <dbReference type="ChEBI" id="CHEBI:33384"/>
        <dbReference type="ChEBI" id="CHEBI:78442"/>
        <dbReference type="ChEBI" id="CHEBI:78533"/>
        <dbReference type="ChEBI" id="CHEBI:456215"/>
        <dbReference type="EC" id="6.1.1.11"/>
    </reaction>
</comment>
<comment type="pathway">
    <text>Aminoacyl-tRNA biosynthesis; selenocysteinyl-tRNA(Sec) biosynthesis; L-seryl-tRNA(Sec) from L-serine and tRNA(Sec): step 1/1.</text>
</comment>
<comment type="subunit">
    <text evidence="2 3 4">Homodimer. A single tRNA molecule binds across the dimer.</text>
</comment>
<comment type="subcellular location">
    <subcellularLocation>
        <location evidence="1">Cytoplasm</location>
    </subcellularLocation>
</comment>
<comment type="domain">
    <text>Consists of two distinct domains, a catalytic core and a N-terminal extension that is involved in tRNA binding.</text>
</comment>
<comment type="similarity">
    <text evidence="5">Belongs to the class-II aminoacyl-tRNA synthetase family. Type-1 seryl-tRNA synthetase subfamily.</text>
</comment>
<dbReference type="EC" id="6.1.1.11"/>
<dbReference type="EMBL" id="AE017221">
    <property type="protein sequence ID" value="AAS80868.1"/>
    <property type="molecule type" value="Genomic_DNA"/>
</dbReference>
<dbReference type="RefSeq" id="WP_011172965.1">
    <property type="nucleotide sequence ID" value="NC_005835.1"/>
</dbReference>
<dbReference type="PDB" id="1SER">
    <property type="method" value="X-ray"/>
    <property type="resolution" value="2.90 A"/>
    <property type="chains" value="A/B=1-421"/>
</dbReference>
<dbReference type="PDB" id="1SES">
    <property type="method" value="X-ray"/>
    <property type="resolution" value="2.50 A"/>
    <property type="chains" value="A/B=1-421"/>
</dbReference>
<dbReference type="PDB" id="1SET">
    <property type="method" value="X-ray"/>
    <property type="resolution" value="2.55 A"/>
    <property type="chains" value="A/B=1-421"/>
</dbReference>
<dbReference type="PDB" id="1SRY">
    <property type="method" value="X-ray"/>
    <property type="resolution" value="2.50 A"/>
    <property type="chains" value="A/B=1-421"/>
</dbReference>
<dbReference type="PDB" id="3ERR">
    <property type="method" value="X-ray"/>
    <property type="resolution" value="2.27 A"/>
    <property type="chains" value="A/B=94-419"/>
</dbReference>
<dbReference type="PDB" id="5EIU">
    <property type="method" value="X-ray"/>
    <property type="resolution" value="1.91 A"/>
    <property type="chains" value="A/D=49-78"/>
</dbReference>
<dbReference type="PDB" id="5F7T">
    <property type="method" value="X-ray"/>
    <property type="resolution" value="2.29 A"/>
    <property type="chains" value="E/F/H/L=49-78"/>
</dbReference>
<dbReference type="PDB" id="5IEA">
    <property type="method" value="X-ray"/>
    <property type="resolution" value="3.26 A"/>
    <property type="chains" value="A/B/C/D/F/K=49-78"/>
</dbReference>
<dbReference type="PDB" id="5VA4">
    <property type="method" value="X-ray"/>
    <property type="resolution" value="2.31 A"/>
    <property type="chains" value="A=49-78"/>
</dbReference>
<dbReference type="PDBsum" id="1SER"/>
<dbReference type="PDBsum" id="1SES"/>
<dbReference type="PDBsum" id="1SET"/>
<dbReference type="PDBsum" id="1SRY"/>
<dbReference type="PDBsum" id="3ERR"/>
<dbReference type="PDBsum" id="5EIU"/>
<dbReference type="PDBsum" id="5F7T"/>
<dbReference type="PDBsum" id="5IEA"/>
<dbReference type="PDBsum" id="5VA4"/>
<dbReference type="SMR" id="P34945"/>
<dbReference type="KEGG" id="tth:TT_C0520"/>
<dbReference type="eggNOG" id="COG0172">
    <property type="taxonomic scope" value="Bacteria"/>
</dbReference>
<dbReference type="HOGENOM" id="CLU_023797_0_1_0"/>
<dbReference type="OrthoDB" id="9804647at2"/>
<dbReference type="BRENDA" id="6.1.1.11">
    <property type="organism ID" value="2305"/>
</dbReference>
<dbReference type="UniPathway" id="UPA00906">
    <property type="reaction ID" value="UER00895"/>
</dbReference>
<dbReference type="EvolutionaryTrace" id="P34945"/>
<dbReference type="Proteomes" id="UP000000592">
    <property type="component" value="Chromosome"/>
</dbReference>
<dbReference type="GO" id="GO:0005737">
    <property type="term" value="C:cytoplasm"/>
    <property type="evidence" value="ECO:0007669"/>
    <property type="project" value="UniProtKB-SubCell"/>
</dbReference>
<dbReference type="GO" id="GO:0005524">
    <property type="term" value="F:ATP binding"/>
    <property type="evidence" value="ECO:0000315"/>
    <property type="project" value="CAFA"/>
</dbReference>
<dbReference type="GO" id="GO:0042802">
    <property type="term" value="F:identical protein binding"/>
    <property type="evidence" value="ECO:0000314"/>
    <property type="project" value="CAFA"/>
</dbReference>
<dbReference type="GO" id="GO:0042803">
    <property type="term" value="F:protein homodimerization activity"/>
    <property type="evidence" value="ECO:0000314"/>
    <property type="project" value="CAFA"/>
</dbReference>
<dbReference type="GO" id="GO:0070905">
    <property type="term" value="F:serine binding"/>
    <property type="evidence" value="ECO:0000314"/>
    <property type="project" value="CAFA"/>
</dbReference>
<dbReference type="GO" id="GO:0004828">
    <property type="term" value="F:serine-tRNA ligase activity"/>
    <property type="evidence" value="ECO:0007669"/>
    <property type="project" value="UniProtKB-UniRule"/>
</dbReference>
<dbReference type="GO" id="GO:0000049">
    <property type="term" value="F:tRNA binding"/>
    <property type="evidence" value="ECO:0000314"/>
    <property type="project" value="CAFA"/>
</dbReference>
<dbReference type="GO" id="GO:0016260">
    <property type="term" value="P:selenocysteine biosynthetic process"/>
    <property type="evidence" value="ECO:0007669"/>
    <property type="project" value="UniProtKB-UniRule"/>
</dbReference>
<dbReference type="GO" id="GO:0006434">
    <property type="term" value="P:seryl-tRNA aminoacylation"/>
    <property type="evidence" value="ECO:0007669"/>
    <property type="project" value="UniProtKB-UniRule"/>
</dbReference>
<dbReference type="CDD" id="cd00770">
    <property type="entry name" value="SerRS_core"/>
    <property type="match status" value="1"/>
</dbReference>
<dbReference type="Gene3D" id="3.30.930.10">
    <property type="entry name" value="Bira Bifunctional Protein, Domain 2"/>
    <property type="match status" value="1"/>
</dbReference>
<dbReference type="Gene3D" id="1.10.287.40">
    <property type="entry name" value="Serine-tRNA synthetase, tRNA binding domain"/>
    <property type="match status" value="2"/>
</dbReference>
<dbReference type="HAMAP" id="MF_00176">
    <property type="entry name" value="Ser_tRNA_synth_type1"/>
    <property type="match status" value="1"/>
</dbReference>
<dbReference type="InterPro" id="IPR002314">
    <property type="entry name" value="aa-tRNA-synt_IIb"/>
</dbReference>
<dbReference type="InterPro" id="IPR006195">
    <property type="entry name" value="aa-tRNA-synth_II"/>
</dbReference>
<dbReference type="InterPro" id="IPR045864">
    <property type="entry name" value="aa-tRNA-synth_II/BPL/LPL"/>
</dbReference>
<dbReference type="InterPro" id="IPR002317">
    <property type="entry name" value="Ser-tRNA-ligase_type_1"/>
</dbReference>
<dbReference type="InterPro" id="IPR015866">
    <property type="entry name" value="Ser-tRNA-synth_1_N"/>
</dbReference>
<dbReference type="InterPro" id="IPR042103">
    <property type="entry name" value="SerRS_1_N_sf"/>
</dbReference>
<dbReference type="InterPro" id="IPR033729">
    <property type="entry name" value="SerRS_core"/>
</dbReference>
<dbReference type="InterPro" id="IPR010978">
    <property type="entry name" value="tRNA-bd_arm"/>
</dbReference>
<dbReference type="NCBIfam" id="TIGR00414">
    <property type="entry name" value="serS"/>
    <property type="match status" value="1"/>
</dbReference>
<dbReference type="PANTHER" id="PTHR43697:SF1">
    <property type="entry name" value="SERINE--TRNA LIGASE"/>
    <property type="match status" value="1"/>
</dbReference>
<dbReference type="PANTHER" id="PTHR43697">
    <property type="entry name" value="SERYL-TRNA SYNTHETASE"/>
    <property type="match status" value="1"/>
</dbReference>
<dbReference type="Pfam" id="PF02403">
    <property type="entry name" value="Seryl_tRNA_N"/>
    <property type="match status" value="1"/>
</dbReference>
<dbReference type="Pfam" id="PF00587">
    <property type="entry name" value="tRNA-synt_2b"/>
    <property type="match status" value="1"/>
</dbReference>
<dbReference type="PIRSF" id="PIRSF001529">
    <property type="entry name" value="Ser-tRNA-synth_IIa"/>
    <property type="match status" value="1"/>
</dbReference>
<dbReference type="PRINTS" id="PR00981">
    <property type="entry name" value="TRNASYNTHSER"/>
</dbReference>
<dbReference type="SUPFAM" id="SSF55681">
    <property type="entry name" value="Class II aaRS and biotin synthetases"/>
    <property type="match status" value="1"/>
</dbReference>
<dbReference type="SUPFAM" id="SSF46589">
    <property type="entry name" value="tRNA-binding arm"/>
    <property type="match status" value="1"/>
</dbReference>
<dbReference type="PROSITE" id="PS50862">
    <property type="entry name" value="AA_TRNA_LIGASE_II"/>
    <property type="match status" value="1"/>
</dbReference>
<sequence>MVDLKRLRQEPEVFHRAIREKGVALDLEALLALDREVQELKKRLQEVQTERNQVAKRVPKAPPEEKEALIARGKALGEEAKRLEEALREKEARLEALLLQVPLPPWPGAPVGGEEANREIKRVGGPPEFSFPPLDHVALMEKNGWWEPRISQVSGSRSYALKGDLALYELALLRFAMDFMARRGFLPMTLPSYAREKAFLGTGHFPAYRDQVWAIAETDLYLTGTAEVVLNALHSGEILPYEALPLRYAGYAPAFRSEAGSFGKDVRGLMRVHQFHKVEQYVLTEASLEASDRAFQELLENAEEILRLLELPYRLVEVATGDMGPGKWRQVDIEVYLPSEGRYRETHSCSALLDWQARRANLRYRDPEGRVRYAYTLNNTALATPRILAMLLENHQLQDGRVRVPQALIPYMGKEVLEPCG</sequence>
<organism>
    <name type="scientific">Thermus thermophilus (strain ATCC BAA-163 / DSM 7039 / HB27)</name>
    <dbReference type="NCBI Taxonomy" id="262724"/>
    <lineage>
        <taxon>Bacteria</taxon>
        <taxon>Thermotogati</taxon>
        <taxon>Deinococcota</taxon>
        <taxon>Deinococci</taxon>
        <taxon>Thermales</taxon>
        <taxon>Thermaceae</taxon>
        <taxon>Thermus</taxon>
    </lineage>
</organism>